<sequence length="285" mass="31611">MNMSKAEAFWQLTRMNRPIGSLLLLWPTLWALFLAADGLPDWHVLIVFVLGVVFMRSAGCVINDFADRKVDGHVKRTANRPLPSGLISSKEALSLFAVLVVCSFLLVLTMNTLTIMLSGIGIVLAIAYPFMKRVTYLPQFVLGLAFSWAIPMAYAAESNQVPPEAWLLFVINALWTIAYDTQYAMVDRDDDVKIGIKSTAILFGRYDKTIIGLLQLSVLALLIVLGSQLALSGIYYWGILAAAGFFVYQQWLIKGREREACFKAFLNNNYVGGLIFIAISASVLI</sequence>
<proteinExistence type="inferred from homology"/>
<feature type="chain" id="PRO_0000262850" description="4-hydroxybenzoate octaprenyltransferase">
    <location>
        <begin position="1"/>
        <end position="285"/>
    </location>
</feature>
<feature type="transmembrane region" description="Helical" evidence="1">
    <location>
        <begin position="19"/>
        <end position="39"/>
    </location>
</feature>
<feature type="transmembrane region" description="Helical" evidence="1">
    <location>
        <begin position="42"/>
        <end position="62"/>
    </location>
</feature>
<feature type="transmembrane region" description="Helical" evidence="1">
    <location>
        <begin position="82"/>
        <end position="102"/>
    </location>
</feature>
<feature type="transmembrane region" description="Helical" evidence="1">
    <location>
        <begin position="104"/>
        <end position="124"/>
    </location>
</feature>
<feature type="transmembrane region" description="Helical" evidence="1">
    <location>
        <begin position="136"/>
        <end position="156"/>
    </location>
</feature>
<feature type="transmembrane region" description="Helical" evidence="1">
    <location>
        <begin position="166"/>
        <end position="186"/>
    </location>
</feature>
<feature type="transmembrane region" description="Helical" evidence="1">
    <location>
        <begin position="210"/>
        <end position="230"/>
    </location>
</feature>
<feature type="transmembrane region" description="Helical" evidence="1">
    <location>
        <begin position="233"/>
        <end position="253"/>
    </location>
</feature>
<feature type="transmembrane region" description="Helical" evidence="1">
    <location>
        <begin position="265"/>
        <end position="285"/>
    </location>
</feature>
<name>UBIA_ALIF1</name>
<dbReference type="EC" id="2.5.1.39" evidence="1"/>
<dbReference type="EMBL" id="CP000020">
    <property type="protein sequence ID" value="AAW86939.1"/>
    <property type="molecule type" value="Genomic_DNA"/>
</dbReference>
<dbReference type="RefSeq" id="WP_011262811.1">
    <property type="nucleotide sequence ID" value="NC_006840.2"/>
</dbReference>
<dbReference type="RefSeq" id="YP_205827.1">
    <property type="nucleotide sequence ID" value="NC_006840.2"/>
</dbReference>
<dbReference type="SMR" id="Q5E207"/>
<dbReference type="STRING" id="312309.VF_2444"/>
<dbReference type="EnsemblBacteria" id="AAW86939">
    <property type="protein sequence ID" value="AAW86939"/>
    <property type="gene ID" value="VF_2444"/>
</dbReference>
<dbReference type="GeneID" id="54165175"/>
<dbReference type="KEGG" id="vfi:VF_2444"/>
<dbReference type="PATRIC" id="fig|312309.11.peg.2472"/>
<dbReference type="eggNOG" id="COG0382">
    <property type="taxonomic scope" value="Bacteria"/>
</dbReference>
<dbReference type="HOGENOM" id="CLU_034879_1_0_6"/>
<dbReference type="OrthoDB" id="9782418at2"/>
<dbReference type="UniPathway" id="UPA00232"/>
<dbReference type="Proteomes" id="UP000000537">
    <property type="component" value="Chromosome I"/>
</dbReference>
<dbReference type="GO" id="GO:0005886">
    <property type="term" value="C:plasma membrane"/>
    <property type="evidence" value="ECO:0007669"/>
    <property type="project" value="UniProtKB-SubCell"/>
</dbReference>
<dbReference type="GO" id="GO:0008412">
    <property type="term" value="F:4-hydroxybenzoate polyprenyltransferase activity"/>
    <property type="evidence" value="ECO:0007669"/>
    <property type="project" value="UniProtKB-UniRule"/>
</dbReference>
<dbReference type="GO" id="GO:0006744">
    <property type="term" value="P:ubiquinone biosynthetic process"/>
    <property type="evidence" value="ECO:0007669"/>
    <property type="project" value="UniProtKB-UniRule"/>
</dbReference>
<dbReference type="CDD" id="cd13959">
    <property type="entry name" value="PT_UbiA_COQ2"/>
    <property type="match status" value="1"/>
</dbReference>
<dbReference type="FunFam" id="1.10.357.140:FF:000002">
    <property type="entry name" value="4-hydroxybenzoate octaprenyltransferase"/>
    <property type="match status" value="1"/>
</dbReference>
<dbReference type="FunFam" id="1.20.120.1780:FF:000001">
    <property type="entry name" value="4-hydroxybenzoate octaprenyltransferase"/>
    <property type="match status" value="1"/>
</dbReference>
<dbReference type="Gene3D" id="1.10.357.140">
    <property type="entry name" value="UbiA prenyltransferase"/>
    <property type="match status" value="1"/>
</dbReference>
<dbReference type="Gene3D" id="1.20.120.1780">
    <property type="entry name" value="UbiA prenyltransferase"/>
    <property type="match status" value="1"/>
</dbReference>
<dbReference type="HAMAP" id="MF_01635">
    <property type="entry name" value="UbiA"/>
    <property type="match status" value="1"/>
</dbReference>
<dbReference type="InterPro" id="IPR006370">
    <property type="entry name" value="HB_polyprenyltransferase-like"/>
</dbReference>
<dbReference type="InterPro" id="IPR039653">
    <property type="entry name" value="Prenyltransferase"/>
</dbReference>
<dbReference type="InterPro" id="IPR000537">
    <property type="entry name" value="UbiA_prenyltransferase"/>
</dbReference>
<dbReference type="InterPro" id="IPR044878">
    <property type="entry name" value="UbiA_sf"/>
</dbReference>
<dbReference type="NCBIfam" id="TIGR01474">
    <property type="entry name" value="ubiA_proteo"/>
    <property type="match status" value="1"/>
</dbReference>
<dbReference type="PANTHER" id="PTHR11048:SF28">
    <property type="entry name" value="4-HYDROXYBENZOATE POLYPRENYLTRANSFERASE, MITOCHONDRIAL"/>
    <property type="match status" value="1"/>
</dbReference>
<dbReference type="PANTHER" id="PTHR11048">
    <property type="entry name" value="PRENYLTRANSFERASES"/>
    <property type="match status" value="1"/>
</dbReference>
<dbReference type="Pfam" id="PF01040">
    <property type="entry name" value="UbiA"/>
    <property type="match status" value="1"/>
</dbReference>
<gene>
    <name evidence="1" type="primary">ubiA</name>
    <name type="ordered locus">VF_2444</name>
</gene>
<reference key="1">
    <citation type="journal article" date="2005" name="Proc. Natl. Acad. Sci. U.S.A.">
        <title>Complete genome sequence of Vibrio fischeri: a symbiotic bacterium with pathogenic congeners.</title>
        <authorList>
            <person name="Ruby E.G."/>
            <person name="Urbanowski M."/>
            <person name="Campbell J."/>
            <person name="Dunn A."/>
            <person name="Faini M."/>
            <person name="Gunsalus R."/>
            <person name="Lostroh P."/>
            <person name="Lupp C."/>
            <person name="McCann J."/>
            <person name="Millikan D."/>
            <person name="Schaefer A."/>
            <person name="Stabb E."/>
            <person name="Stevens A."/>
            <person name="Visick K."/>
            <person name="Whistler C."/>
            <person name="Greenberg E.P."/>
        </authorList>
    </citation>
    <scope>NUCLEOTIDE SEQUENCE [LARGE SCALE GENOMIC DNA]</scope>
    <source>
        <strain>ATCC 700601 / ES114</strain>
    </source>
</reference>
<organism>
    <name type="scientific">Aliivibrio fischeri (strain ATCC 700601 / ES114)</name>
    <name type="common">Vibrio fischeri</name>
    <dbReference type="NCBI Taxonomy" id="312309"/>
    <lineage>
        <taxon>Bacteria</taxon>
        <taxon>Pseudomonadati</taxon>
        <taxon>Pseudomonadota</taxon>
        <taxon>Gammaproteobacteria</taxon>
        <taxon>Vibrionales</taxon>
        <taxon>Vibrionaceae</taxon>
        <taxon>Aliivibrio</taxon>
    </lineage>
</organism>
<accession>Q5E207</accession>
<comment type="function">
    <text evidence="1">Catalyzes the prenylation of para-hydroxybenzoate (PHB) with an all-trans polyprenyl group. Mediates the second step in the final reaction sequence of ubiquinone-8 (UQ-8) biosynthesis, which is the condensation of the polyisoprenoid side chain with PHB, generating the first membrane-bound Q intermediate 3-octaprenyl-4-hydroxybenzoate.</text>
</comment>
<comment type="catalytic activity">
    <reaction evidence="1">
        <text>all-trans-octaprenyl diphosphate + 4-hydroxybenzoate = 4-hydroxy-3-(all-trans-octaprenyl)benzoate + diphosphate</text>
        <dbReference type="Rhea" id="RHEA:27782"/>
        <dbReference type="ChEBI" id="CHEBI:1617"/>
        <dbReference type="ChEBI" id="CHEBI:17879"/>
        <dbReference type="ChEBI" id="CHEBI:33019"/>
        <dbReference type="ChEBI" id="CHEBI:57711"/>
        <dbReference type="EC" id="2.5.1.39"/>
    </reaction>
</comment>
<comment type="cofactor">
    <cofactor evidence="1">
        <name>Mg(2+)</name>
        <dbReference type="ChEBI" id="CHEBI:18420"/>
    </cofactor>
</comment>
<comment type="pathway">
    <text evidence="1">Cofactor biosynthesis; ubiquinone biosynthesis.</text>
</comment>
<comment type="subcellular location">
    <subcellularLocation>
        <location evidence="1">Cell inner membrane</location>
        <topology evidence="1">Multi-pass membrane protein</topology>
    </subcellularLocation>
</comment>
<comment type="similarity">
    <text evidence="1">Belongs to the UbiA prenyltransferase family.</text>
</comment>
<protein>
    <recommendedName>
        <fullName evidence="1">4-hydroxybenzoate octaprenyltransferase</fullName>
        <ecNumber evidence="1">2.5.1.39</ecNumber>
    </recommendedName>
    <alternativeName>
        <fullName evidence="1">4-HB polyprenyltransferase</fullName>
    </alternativeName>
</protein>
<evidence type="ECO:0000255" key="1">
    <source>
        <dbReference type="HAMAP-Rule" id="MF_01635"/>
    </source>
</evidence>
<keyword id="KW-0997">Cell inner membrane</keyword>
<keyword id="KW-1003">Cell membrane</keyword>
<keyword id="KW-0460">Magnesium</keyword>
<keyword id="KW-0472">Membrane</keyword>
<keyword id="KW-1185">Reference proteome</keyword>
<keyword id="KW-0808">Transferase</keyword>
<keyword id="KW-0812">Transmembrane</keyword>
<keyword id="KW-1133">Transmembrane helix</keyword>
<keyword id="KW-0831">Ubiquinone biosynthesis</keyword>